<feature type="chain" id="PRO_0000247390" description="Putative collagenous domain-containing protein R238">
    <location>
        <begin position="1"/>
        <end position="441"/>
    </location>
</feature>
<feature type="domain" description="Collagen-like">
    <location>
        <begin position="164"/>
        <end position="199"/>
    </location>
</feature>
<feature type="region of interest" description="Disordered" evidence="1">
    <location>
        <begin position="171"/>
        <end position="198"/>
    </location>
</feature>
<feature type="compositionally biased region" description="Basic and acidic residues" evidence="1">
    <location>
        <begin position="187"/>
        <end position="198"/>
    </location>
</feature>
<protein>
    <recommendedName>
        <fullName>Putative collagenous domain-containing protein R238</fullName>
    </recommendedName>
</protein>
<organismHost>
    <name type="scientific">Acanthamoeba polyphaga</name>
    <name type="common">Amoeba</name>
    <dbReference type="NCBI Taxonomy" id="5757"/>
</organismHost>
<accession>Q5UPX4</accession>
<keyword id="KW-0176">Collagen</keyword>
<keyword id="KW-1185">Reference proteome</keyword>
<reference key="1">
    <citation type="journal article" date="2004" name="Science">
        <title>The 1.2-megabase genome sequence of Mimivirus.</title>
        <authorList>
            <person name="Raoult D."/>
            <person name="Audic S."/>
            <person name="Robert C."/>
            <person name="Abergel C."/>
            <person name="Renesto P."/>
            <person name="Ogata H."/>
            <person name="La Scola B."/>
            <person name="Susan M."/>
            <person name="Claverie J.-M."/>
        </authorList>
    </citation>
    <scope>NUCLEOTIDE SEQUENCE [LARGE SCALE GENOMIC DNA]</scope>
    <source>
        <strain>Rowbotham-Bradford</strain>
    </source>
</reference>
<gene>
    <name type="ordered locus">MIMI_R238</name>
</gene>
<sequence length="441" mass="44652">MSSYNSPHAYYPHDNTIINISGSDNTTNINTTTINSTSVDQDIHYYEDGTHYDRRNTHANCNNYNVGNGIGRNIIDNNRHESIRDCNESIRNVLQGRLNRSDNSCRLDVNSQILVGVGAPANSCGTNGDIYIDKCTRDYYTNRNRIWVFVGNLECREQIYGTGGCKGEKGIKGELGPKGNTGQKGDIGSKGDRGDKGEPTISMFSYINSYEQSVPGGFTSVVPSKATIAYISCVGGGGGGSSGSGNSGFHGGGAGGSVIKYPVSVVENQVIRGTVGAGGSGGQVGTLGMCGTDTVVTIGTLTITAKAGLSPTETSGGDGGTVIFAQGMFSPAIAKGGTLSSPSGSNGNVGFFAFSGAGGGFRGGNGGNILAFNGGKSQGPDTAGGGGASAFADGGSITIRGCVTASKGSGGGGAIQTGPVSISGVAGNGGNGYVRIDYYSQ</sequence>
<organism>
    <name type="scientific">Acanthamoeba polyphaga mimivirus</name>
    <name type="common">APMV</name>
    <dbReference type="NCBI Taxonomy" id="212035"/>
    <lineage>
        <taxon>Viruses</taxon>
        <taxon>Varidnaviria</taxon>
        <taxon>Bamfordvirae</taxon>
        <taxon>Nucleocytoviricota</taxon>
        <taxon>Megaviricetes</taxon>
        <taxon>Imitervirales</taxon>
        <taxon>Mimiviridae</taxon>
        <taxon>Megamimivirinae</taxon>
        <taxon>Mimivirus</taxon>
        <taxon>Mimivirus bradfordmassiliense</taxon>
    </lineage>
</organism>
<proteinExistence type="predicted"/>
<name>COLL8_MIMIV</name>
<evidence type="ECO:0000256" key="1">
    <source>
        <dbReference type="SAM" id="MobiDB-lite"/>
    </source>
</evidence>
<dbReference type="EMBL" id="AY653733">
    <property type="protein sequence ID" value="AAV50511.1"/>
    <property type="molecule type" value="Genomic_DNA"/>
</dbReference>
<dbReference type="KEGG" id="vg:9924845"/>
<dbReference type="OrthoDB" id="35345at10239"/>
<dbReference type="Proteomes" id="UP000001134">
    <property type="component" value="Genome"/>
</dbReference>